<accession>Q2EEM0</accession>
<proteinExistence type="predicted"/>
<keyword id="KW-0472">Membrane</keyword>
<keyword id="KW-1185">Reference proteome</keyword>
<keyword id="KW-0812">Transmembrane</keyword>
<keyword id="KW-1133">Transmembrane helix</keyword>
<protein>
    <recommendedName>
        <fullName>Putative uncharacterized protein C27E2.12</fullName>
    </recommendedName>
</protein>
<reference key="1">
    <citation type="journal article" date="2002" name="Nature">
        <title>The genome sequence of Schizosaccharomyces pombe.</title>
        <authorList>
            <person name="Wood V."/>
            <person name="Gwilliam R."/>
            <person name="Rajandream M.A."/>
            <person name="Lyne M.H."/>
            <person name="Lyne R."/>
            <person name="Stewart A."/>
            <person name="Sgouros J.G."/>
            <person name="Peat N."/>
            <person name="Hayles J."/>
            <person name="Baker S.G."/>
            <person name="Basham D."/>
            <person name="Bowman S."/>
            <person name="Brooks K."/>
            <person name="Brown D."/>
            <person name="Brown S."/>
            <person name="Chillingworth T."/>
            <person name="Churcher C.M."/>
            <person name="Collins M."/>
            <person name="Connor R."/>
            <person name="Cronin A."/>
            <person name="Davis P."/>
            <person name="Feltwell T."/>
            <person name="Fraser A."/>
            <person name="Gentles S."/>
            <person name="Goble A."/>
            <person name="Hamlin N."/>
            <person name="Harris D.E."/>
            <person name="Hidalgo J."/>
            <person name="Hodgson G."/>
            <person name="Holroyd S."/>
            <person name="Hornsby T."/>
            <person name="Howarth S."/>
            <person name="Huckle E.J."/>
            <person name="Hunt S."/>
            <person name="Jagels K."/>
            <person name="James K.D."/>
            <person name="Jones L."/>
            <person name="Jones M."/>
            <person name="Leather S."/>
            <person name="McDonald S."/>
            <person name="McLean J."/>
            <person name="Mooney P."/>
            <person name="Moule S."/>
            <person name="Mungall K.L."/>
            <person name="Murphy L.D."/>
            <person name="Niblett D."/>
            <person name="Odell C."/>
            <person name="Oliver K."/>
            <person name="O'Neil S."/>
            <person name="Pearson D."/>
            <person name="Quail M.A."/>
            <person name="Rabbinowitsch E."/>
            <person name="Rutherford K.M."/>
            <person name="Rutter S."/>
            <person name="Saunders D."/>
            <person name="Seeger K."/>
            <person name="Sharp S."/>
            <person name="Skelton J."/>
            <person name="Simmonds M.N."/>
            <person name="Squares R."/>
            <person name="Squares S."/>
            <person name="Stevens K."/>
            <person name="Taylor K."/>
            <person name="Taylor R.G."/>
            <person name="Tivey A."/>
            <person name="Walsh S.V."/>
            <person name="Warren T."/>
            <person name="Whitehead S."/>
            <person name="Woodward J.R."/>
            <person name="Volckaert G."/>
            <person name="Aert R."/>
            <person name="Robben J."/>
            <person name="Grymonprez B."/>
            <person name="Weltjens I."/>
            <person name="Vanstreels E."/>
            <person name="Rieger M."/>
            <person name="Schaefer M."/>
            <person name="Mueller-Auer S."/>
            <person name="Gabel C."/>
            <person name="Fuchs M."/>
            <person name="Duesterhoeft A."/>
            <person name="Fritzc C."/>
            <person name="Holzer E."/>
            <person name="Moestl D."/>
            <person name="Hilbert H."/>
            <person name="Borzym K."/>
            <person name="Langer I."/>
            <person name="Beck A."/>
            <person name="Lehrach H."/>
            <person name="Reinhardt R."/>
            <person name="Pohl T.M."/>
            <person name="Eger P."/>
            <person name="Zimmermann W."/>
            <person name="Wedler H."/>
            <person name="Wambutt R."/>
            <person name="Purnelle B."/>
            <person name="Goffeau A."/>
            <person name="Cadieu E."/>
            <person name="Dreano S."/>
            <person name="Gloux S."/>
            <person name="Lelaure V."/>
            <person name="Mottier S."/>
            <person name="Galibert F."/>
            <person name="Aves S.J."/>
            <person name="Xiang Z."/>
            <person name="Hunt C."/>
            <person name="Moore K."/>
            <person name="Hurst S.M."/>
            <person name="Lucas M."/>
            <person name="Rochet M."/>
            <person name="Gaillardin C."/>
            <person name="Tallada V.A."/>
            <person name="Garzon A."/>
            <person name="Thode G."/>
            <person name="Daga R.R."/>
            <person name="Cruzado L."/>
            <person name="Jimenez J."/>
            <person name="Sanchez M."/>
            <person name="del Rey F."/>
            <person name="Benito J."/>
            <person name="Dominguez A."/>
            <person name="Revuelta J.L."/>
            <person name="Moreno S."/>
            <person name="Armstrong J."/>
            <person name="Forsburg S.L."/>
            <person name="Cerutti L."/>
            <person name="Lowe T."/>
            <person name="McCombie W.R."/>
            <person name="Paulsen I."/>
            <person name="Potashkin J."/>
            <person name="Shpakovski G.V."/>
            <person name="Ussery D."/>
            <person name="Barrell B.G."/>
            <person name="Nurse P."/>
        </authorList>
    </citation>
    <scope>NUCLEOTIDE SEQUENCE [LARGE SCALE GENOMIC DNA]</scope>
    <source>
        <strain>972 / ATCC 24843</strain>
    </source>
</reference>
<feature type="chain" id="PRO_0000303971" description="Putative uncharacterized protein C27E2.12">
    <location>
        <begin position="1"/>
        <end position="76"/>
    </location>
</feature>
<feature type="transmembrane region" description="Helical" evidence="1">
    <location>
        <begin position="24"/>
        <end position="44"/>
    </location>
</feature>
<dbReference type="EMBL" id="CU329670">
    <property type="protein sequence ID" value="CAJ76914.1"/>
    <property type="molecule type" value="Genomic_DNA"/>
</dbReference>
<dbReference type="RefSeq" id="XP_001713098.1">
    <property type="nucleotide sequence ID" value="XM_001713046.1"/>
</dbReference>
<dbReference type="STRING" id="284812.Q2EEM0"/>
<dbReference type="PaxDb" id="4896-SPAC27E2.12.1"/>
<dbReference type="EnsemblFungi" id="SPAC27E2.12.1">
    <property type="protein sequence ID" value="SPAC27E2.12.1:pep"/>
    <property type="gene ID" value="SPAC27E2.12"/>
</dbReference>
<dbReference type="PomBase" id="SPAC27E2.12"/>
<dbReference type="VEuPathDB" id="FungiDB:SPAC27E2.12"/>
<dbReference type="HOGENOM" id="CLU_2655857_0_0_1"/>
<dbReference type="InParanoid" id="Q2EEM0"/>
<dbReference type="PRO" id="PR:Q2EEM0"/>
<dbReference type="Proteomes" id="UP000002485">
    <property type="component" value="Chromosome I"/>
</dbReference>
<dbReference type="GO" id="GO:0016020">
    <property type="term" value="C:membrane"/>
    <property type="evidence" value="ECO:0007669"/>
    <property type="project" value="UniProtKB-SubCell"/>
</dbReference>
<organism>
    <name type="scientific">Schizosaccharomyces pombe (strain 972 / ATCC 24843)</name>
    <name type="common">Fission yeast</name>
    <dbReference type="NCBI Taxonomy" id="284812"/>
    <lineage>
        <taxon>Eukaryota</taxon>
        <taxon>Fungi</taxon>
        <taxon>Dikarya</taxon>
        <taxon>Ascomycota</taxon>
        <taxon>Taphrinomycotina</taxon>
        <taxon>Schizosaccharomycetes</taxon>
        <taxon>Schizosaccharomycetales</taxon>
        <taxon>Schizosaccharomycetaceae</taxon>
        <taxon>Schizosaccharomyces</taxon>
    </lineage>
</organism>
<name>YEIC_SCHPO</name>
<comment type="subcellular location">
    <subcellularLocation>
        <location evidence="2">Membrane</location>
        <topology evidence="2">Single-pass membrane protein</topology>
    </subcellularLocation>
</comment>
<gene>
    <name type="ORF">SPAC27E2.12</name>
</gene>
<evidence type="ECO:0000255" key="1"/>
<evidence type="ECO:0000305" key="2"/>
<sequence length="76" mass="8703">MGIQGLYQKRFCLFVCLERFQWRGAIFLVCYPLYCVVCFVSVLCRLYCILMSAASATQTICDQSILHVHGVENMKA</sequence>